<protein>
    <recommendedName>
        <fullName>Putative tyrosine phosphatase 197R</fullName>
        <ecNumber evidence="2">3.1.3.48</ecNumber>
    </recommendedName>
</protein>
<proteinExistence type="inferred from homology"/>
<reference key="1">
    <citation type="journal article" date="2001" name="Virology">
        <title>Analysis of the first complete DNA sequence of an invertebrate iridovirus: coding strategy of the genome of Chilo iridescent virus.</title>
        <authorList>
            <person name="Jakob N.J."/>
            <person name="Mueller K."/>
            <person name="Bahr U."/>
            <person name="Darai G."/>
        </authorList>
    </citation>
    <scope>NUCLEOTIDE SEQUENCE [LARGE SCALE GENOMIC DNA]</scope>
</reference>
<reference key="2">
    <citation type="journal article" date="2007" name="Virol. J.">
        <title>Comparative genomic analysis of the family Iridoviridae: re-annotating and defining the core set of iridovirus genes.</title>
        <authorList>
            <person name="Eaton H.E."/>
            <person name="Metcalf J."/>
            <person name="Penny E."/>
            <person name="Tcherepanov V."/>
            <person name="Upton C."/>
            <person name="Brunetti C.R."/>
        </authorList>
    </citation>
    <scope>GENOME REANNOTATION</scope>
</reference>
<accession>Q91FX3</accession>
<organism>
    <name type="scientific">Invertebrate iridescent virus 6</name>
    <name type="common">IIV-6</name>
    <name type="synonym">Chilo iridescent virus</name>
    <dbReference type="NCBI Taxonomy" id="176652"/>
    <lineage>
        <taxon>Viruses</taxon>
        <taxon>Varidnaviria</taxon>
        <taxon>Bamfordvirae</taxon>
        <taxon>Nucleocytoviricota</taxon>
        <taxon>Megaviricetes</taxon>
        <taxon>Pimascovirales</taxon>
        <taxon>Iridoviridae</taxon>
        <taxon>Betairidovirinae</taxon>
        <taxon>Iridovirus</taxon>
    </lineage>
</organism>
<sequence length="266" mass="30377">MDELMGKTCSYFYPRPTLGSLSDKKALFGGYPTQEQVYLLESIGVEWFVDLTLGNEKRTTPYIIQNKEKYITFPIMDQRVPENIIEFVKFINKLVNIISGLTDCEKLYIHCKGGHGRSGLIAATLLCVMDEISPEKAIKETTLSHPQTKAQCNFLHYLFGSQNINNDSLLSPYSHHQVIIVCGKTETVFKSASDAVYYLLHNSSGKSDYFIRCVEFVLDNKFQQHPSCKQQLLQTGFRQLQCRLGQNCIGTICIKLRNKYYNNLEV</sequence>
<comment type="catalytic activity">
    <reaction evidence="2">
        <text>O-phospho-L-tyrosyl-[protein] + H2O = L-tyrosyl-[protein] + phosphate</text>
        <dbReference type="Rhea" id="RHEA:10684"/>
        <dbReference type="Rhea" id="RHEA-COMP:10136"/>
        <dbReference type="Rhea" id="RHEA-COMP:20101"/>
        <dbReference type="ChEBI" id="CHEBI:15377"/>
        <dbReference type="ChEBI" id="CHEBI:43474"/>
        <dbReference type="ChEBI" id="CHEBI:46858"/>
        <dbReference type="ChEBI" id="CHEBI:61978"/>
        <dbReference type="EC" id="3.1.3.48"/>
    </reaction>
</comment>
<comment type="similarity">
    <text evidence="3">Belongs to the protein-tyrosine phosphatase family.</text>
</comment>
<name>VF197_IIV6</name>
<feature type="chain" id="PRO_0000376960" description="Putative tyrosine phosphatase 197R">
    <location>
        <begin position="1"/>
        <end position="266"/>
    </location>
</feature>
<feature type="domain" description="Tyrosine-protein phosphatase" evidence="1">
    <location>
        <begin position="15"/>
        <end position="167"/>
    </location>
</feature>
<feature type="active site" description="Phosphocysteine intermediate" evidence="1">
    <location>
        <position position="111"/>
    </location>
</feature>
<keyword id="KW-0378">Hydrolase</keyword>
<keyword id="KW-0904">Protein phosphatase</keyword>
<keyword id="KW-1185">Reference proteome</keyword>
<evidence type="ECO:0000255" key="1">
    <source>
        <dbReference type="PROSITE-ProRule" id="PRU00160"/>
    </source>
</evidence>
<evidence type="ECO:0000255" key="2">
    <source>
        <dbReference type="PROSITE-ProRule" id="PRU10044"/>
    </source>
</evidence>
<evidence type="ECO:0000305" key="3"/>
<dbReference type="EC" id="3.1.3.48" evidence="2"/>
<dbReference type="EMBL" id="AF303741">
    <property type="protein sequence ID" value="AAK82059.1"/>
    <property type="molecule type" value="Genomic_DNA"/>
</dbReference>
<dbReference type="RefSeq" id="NP_149660.1">
    <property type="nucleotide sequence ID" value="NC_003038.1"/>
</dbReference>
<dbReference type="SMR" id="Q91FX3"/>
<dbReference type="KEGG" id="vg:1733198"/>
<dbReference type="OrthoDB" id="11806at10239"/>
<dbReference type="Proteomes" id="UP000001359">
    <property type="component" value="Genome"/>
</dbReference>
<dbReference type="GO" id="GO:0004725">
    <property type="term" value="F:protein tyrosine phosphatase activity"/>
    <property type="evidence" value="ECO:0007669"/>
    <property type="project" value="RHEA"/>
</dbReference>
<dbReference type="Gene3D" id="3.90.190.10">
    <property type="entry name" value="Protein tyrosine phosphatase superfamily"/>
    <property type="match status" value="1"/>
</dbReference>
<dbReference type="InterPro" id="IPR029021">
    <property type="entry name" value="Prot-tyrosine_phosphatase-like"/>
</dbReference>
<dbReference type="InterPro" id="IPR057023">
    <property type="entry name" value="PTP-SAK"/>
</dbReference>
<dbReference type="InterPro" id="IPR016130">
    <property type="entry name" value="Tyr_Pase_AS"/>
</dbReference>
<dbReference type="InterPro" id="IPR000387">
    <property type="entry name" value="Tyr_Pase_dom"/>
</dbReference>
<dbReference type="InterPro" id="IPR020422">
    <property type="entry name" value="TYR_PHOSPHATASE_DUAL_dom"/>
</dbReference>
<dbReference type="Pfam" id="PF22784">
    <property type="entry name" value="PTP-SAK"/>
    <property type="match status" value="1"/>
</dbReference>
<dbReference type="SUPFAM" id="SSF52799">
    <property type="entry name" value="(Phosphotyrosine protein) phosphatases II"/>
    <property type="match status" value="1"/>
</dbReference>
<dbReference type="PROSITE" id="PS00383">
    <property type="entry name" value="TYR_PHOSPHATASE_1"/>
    <property type="match status" value="1"/>
</dbReference>
<dbReference type="PROSITE" id="PS50056">
    <property type="entry name" value="TYR_PHOSPHATASE_2"/>
    <property type="match status" value="1"/>
</dbReference>
<dbReference type="PROSITE" id="PS50054">
    <property type="entry name" value="TYR_PHOSPHATASE_DUAL"/>
    <property type="match status" value="1"/>
</dbReference>
<organismHost>
    <name type="scientific">Acheta domesticus</name>
    <name type="common">House cricket</name>
    <dbReference type="NCBI Taxonomy" id="6997"/>
</organismHost>
<organismHost>
    <name type="scientific">Chilo suppressalis</name>
    <name type="common">Asiatic rice borer moth</name>
    <dbReference type="NCBI Taxonomy" id="168631"/>
</organismHost>
<organismHost>
    <name type="scientific">Gryllus bimaculatus</name>
    <name type="common">Two-spotted cricket</name>
    <dbReference type="NCBI Taxonomy" id="6999"/>
</organismHost>
<organismHost>
    <name type="scientific">Gryllus campestris</name>
    <dbReference type="NCBI Taxonomy" id="58607"/>
</organismHost>
<organismHost>
    <name type="scientific">Spodoptera frugiperda</name>
    <name type="common">Fall armyworm</name>
    <dbReference type="NCBI Taxonomy" id="7108"/>
</organismHost>
<gene>
    <name type="ORF">IIV6-197R</name>
</gene>